<sequence length="76" mass="8569">MSSIFDKVKAIVVEQLGVDEEEVTMETSFEDLNADSLDIVELVMALEEEFDIEIPDEDAEKIKTIGSAVEYIKENQ</sequence>
<keyword id="KW-0963">Cytoplasm</keyword>
<keyword id="KW-0275">Fatty acid biosynthesis</keyword>
<keyword id="KW-0276">Fatty acid metabolism</keyword>
<keyword id="KW-0444">Lipid biosynthesis</keyword>
<keyword id="KW-0443">Lipid metabolism</keyword>
<keyword id="KW-0596">Phosphopantetheine</keyword>
<keyword id="KW-0597">Phosphoprotein</keyword>
<keyword id="KW-1185">Reference proteome</keyword>
<organism>
    <name type="scientific">Heliobacterium modesticaldum (strain ATCC 51547 / Ice1)</name>
    <dbReference type="NCBI Taxonomy" id="498761"/>
    <lineage>
        <taxon>Bacteria</taxon>
        <taxon>Bacillati</taxon>
        <taxon>Bacillota</taxon>
        <taxon>Clostridia</taxon>
        <taxon>Eubacteriales</taxon>
        <taxon>Heliobacteriaceae</taxon>
        <taxon>Heliomicrobium</taxon>
    </lineage>
</organism>
<evidence type="ECO:0000255" key="1">
    <source>
        <dbReference type="HAMAP-Rule" id="MF_01217"/>
    </source>
</evidence>
<evidence type="ECO:0000255" key="2">
    <source>
        <dbReference type="PROSITE-ProRule" id="PRU00258"/>
    </source>
</evidence>
<gene>
    <name evidence="1" type="primary">acpP</name>
    <name type="ordered locus">Helmi_20970</name>
    <name type="ORF">HM1_2166</name>
</gene>
<reference key="1">
    <citation type="journal article" date="2008" name="J. Bacteriol.">
        <title>The genome of Heliobacterium modesticaldum, a phototrophic representative of the Firmicutes containing the simplest photosynthetic apparatus.</title>
        <authorList>
            <person name="Sattley W.M."/>
            <person name="Madigan M.T."/>
            <person name="Swingley W.D."/>
            <person name="Cheung P.C."/>
            <person name="Clocksin K.M."/>
            <person name="Conrad A.L."/>
            <person name="Dejesa L.C."/>
            <person name="Honchak B.M."/>
            <person name="Jung D.O."/>
            <person name="Karbach L.E."/>
            <person name="Kurdoglu A."/>
            <person name="Lahiri S."/>
            <person name="Mastrian S.D."/>
            <person name="Page L.E."/>
            <person name="Taylor H.L."/>
            <person name="Wang Z.T."/>
            <person name="Raymond J."/>
            <person name="Chen M."/>
            <person name="Blankenship R.E."/>
            <person name="Touchman J.W."/>
        </authorList>
    </citation>
    <scope>NUCLEOTIDE SEQUENCE [LARGE SCALE GENOMIC DNA]</scope>
    <source>
        <strain>ATCC 51547 / Ice1</strain>
    </source>
</reference>
<protein>
    <recommendedName>
        <fullName evidence="1">Acyl carrier protein</fullName>
        <shortName evidence="1">ACP</shortName>
    </recommendedName>
</protein>
<accession>B0TGW1</accession>
<proteinExistence type="inferred from homology"/>
<feature type="chain" id="PRO_1000139031" description="Acyl carrier protein">
    <location>
        <begin position="1"/>
        <end position="76"/>
    </location>
</feature>
<feature type="domain" description="Carrier" evidence="2">
    <location>
        <begin position="2"/>
        <end position="76"/>
    </location>
</feature>
<feature type="modified residue" description="O-(pantetheine 4'-phosphoryl)serine" evidence="2">
    <location>
        <position position="36"/>
    </location>
</feature>
<comment type="function">
    <text evidence="1">Carrier of the growing fatty acid chain in fatty acid biosynthesis.</text>
</comment>
<comment type="pathway">
    <text evidence="1">Lipid metabolism; fatty acid biosynthesis.</text>
</comment>
<comment type="subcellular location">
    <subcellularLocation>
        <location evidence="1">Cytoplasm</location>
    </subcellularLocation>
</comment>
<comment type="PTM">
    <text evidence="1">4'-phosphopantetheine is transferred from CoA to a specific serine of apo-ACP by AcpS. This modification is essential for activity because fatty acids are bound in thioester linkage to the sulfhydryl of the prosthetic group.</text>
</comment>
<comment type="similarity">
    <text evidence="1">Belongs to the acyl carrier protein (ACP) family.</text>
</comment>
<dbReference type="EMBL" id="CP000930">
    <property type="protein sequence ID" value="ABZ84722.1"/>
    <property type="molecule type" value="Genomic_DNA"/>
</dbReference>
<dbReference type="RefSeq" id="WP_012283222.1">
    <property type="nucleotide sequence ID" value="NC_010337.2"/>
</dbReference>
<dbReference type="SMR" id="B0TGW1"/>
<dbReference type="STRING" id="498761.HM1_2166"/>
<dbReference type="KEGG" id="hmo:HM1_2166"/>
<dbReference type="eggNOG" id="COG0236">
    <property type="taxonomic scope" value="Bacteria"/>
</dbReference>
<dbReference type="HOGENOM" id="CLU_108696_5_1_9"/>
<dbReference type="OrthoDB" id="9804551at2"/>
<dbReference type="UniPathway" id="UPA00094"/>
<dbReference type="Proteomes" id="UP000008550">
    <property type="component" value="Chromosome"/>
</dbReference>
<dbReference type="GO" id="GO:0005829">
    <property type="term" value="C:cytosol"/>
    <property type="evidence" value="ECO:0007669"/>
    <property type="project" value="TreeGrafter"/>
</dbReference>
<dbReference type="GO" id="GO:0016020">
    <property type="term" value="C:membrane"/>
    <property type="evidence" value="ECO:0007669"/>
    <property type="project" value="GOC"/>
</dbReference>
<dbReference type="GO" id="GO:0000035">
    <property type="term" value="F:acyl binding"/>
    <property type="evidence" value="ECO:0007669"/>
    <property type="project" value="TreeGrafter"/>
</dbReference>
<dbReference type="GO" id="GO:0000036">
    <property type="term" value="F:acyl carrier activity"/>
    <property type="evidence" value="ECO:0007669"/>
    <property type="project" value="UniProtKB-UniRule"/>
</dbReference>
<dbReference type="GO" id="GO:0031177">
    <property type="term" value="F:phosphopantetheine binding"/>
    <property type="evidence" value="ECO:0007669"/>
    <property type="project" value="InterPro"/>
</dbReference>
<dbReference type="GO" id="GO:0009245">
    <property type="term" value="P:lipid A biosynthetic process"/>
    <property type="evidence" value="ECO:0007669"/>
    <property type="project" value="TreeGrafter"/>
</dbReference>
<dbReference type="FunFam" id="1.10.1200.10:FF:000001">
    <property type="entry name" value="Acyl carrier protein"/>
    <property type="match status" value="1"/>
</dbReference>
<dbReference type="Gene3D" id="1.10.1200.10">
    <property type="entry name" value="ACP-like"/>
    <property type="match status" value="1"/>
</dbReference>
<dbReference type="HAMAP" id="MF_01217">
    <property type="entry name" value="Acyl_carrier"/>
    <property type="match status" value="1"/>
</dbReference>
<dbReference type="InterPro" id="IPR003231">
    <property type="entry name" value="ACP"/>
</dbReference>
<dbReference type="InterPro" id="IPR036736">
    <property type="entry name" value="ACP-like_sf"/>
</dbReference>
<dbReference type="InterPro" id="IPR020806">
    <property type="entry name" value="PKS_PP-bd"/>
</dbReference>
<dbReference type="InterPro" id="IPR009081">
    <property type="entry name" value="PP-bd_ACP"/>
</dbReference>
<dbReference type="InterPro" id="IPR006162">
    <property type="entry name" value="Ppantetheine_attach_site"/>
</dbReference>
<dbReference type="NCBIfam" id="TIGR00517">
    <property type="entry name" value="acyl_carrier"/>
    <property type="match status" value="1"/>
</dbReference>
<dbReference type="NCBIfam" id="NF002148">
    <property type="entry name" value="PRK00982.1-2"/>
    <property type="match status" value="1"/>
</dbReference>
<dbReference type="NCBIfam" id="NF002149">
    <property type="entry name" value="PRK00982.1-3"/>
    <property type="match status" value="1"/>
</dbReference>
<dbReference type="NCBIfam" id="NF002150">
    <property type="entry name" value="PRK00982.1-4"/>
    <property type="match status" value="1"/>
</dbReference>
<dbReference type="NCBIfam" id="NF002151">
    <property type="entry name" value="PRK00982.1-5"/>
    <property type="match status" value="1"/>
</dbReference>
<dbReference type="PANTHER" id="PTHR20863">
    <property type="entry name" value="ACYL CARRIER PROTEIN"/>
    <property type="match status" value="1"/>
</dbReference>
<dbReference type="PANTHER" id="PTHR20863:SF76">
    <property type="entry name" value="CARRIER DOMAIN-CONTAINING PROTEIN"/>
    <property type="match status" value="1"/>
</dbReference>
<dbReference type="Pfam" id="PF00550">
    <property type="entry name" value="PP-binding"/>
    <property type="match status" value="1"/>
</dbReference>
<dbReference type="SMART" id="SM00823">
    <property type="entry name" value="PKS_PP"/>
    <property type="match status" value="1"/>
</dbReference>
<dbReference type="SUPFAM" id="SSF47336">
    <property type="entry name" value="ACP-like"/>
    <property type="match status" value="1"/>
</dbReference>
<dbReference type="PROSITE" id="PS50075">
    <property type="entry name" value="CARRIER"/>
    <property type="match status" value="1"/>
</dbReference>
<dbReference type="PROSITE" id="PS00012">
    <property type="entry name" value="PHOSPHOPANTETHEINE"/>
    <property type="match status" value="1"/>
</dbReference>
<name>ACP_HELMI</name>